<keyword id="KW-0012">Acyltransferase</keyword>
<keyword id="KW-0449">Lipoprotein</keyword>
<keyword id="KW-0472">Membrane</keyword>
<keyword id="KW-0564">Palmitate</keyword>
<keyword id="KW-1185">Reference proteome</keyword>
<keyword id="KW-0808">Transferase</keyword>
<keyword id="KW-0812">Transmembrane</keyword>
<keyword id="KW-1133">Transmembrane helix</keyword>
<keyword id="KW-0926">Vacuole</keyword>
<proteinExistence type="inferred from homology"/>
<name>PFA3_EREGS</name>
<dbReference type="EC" id="2.3.1.225"/>
<dbReference type="EMBL" id="AE016817">
    <property type="protein sequence ID" value="AAS51723.1"/>
    <property type="status" value="ALT_INIT"/>
    <property type="molecule type" value="Genomic_DNA"/>
</dbReference>
<dbReference type="RefSeq" id="NP_983899.1">
    <property type="nucleotide sequence ID" value="NM_209252.1"/>
</dbReference>
<dbReference type="SMR" id="Q75AW7"/>
<dbReference type="FunCoup" id="Q75AW7">
    <property type="interactions" value="458"/>
</dbReference>
<dbReference type="STRING" id="284811.Q75AW7"/>
<dbReference type="GeneID" id="4620041"/>
<dbReference type="KEGG" id="ago:AGOS_ADL197C"/>
<dbReference type="eggNOG" id="KOG1315">
    <property type="taxonomic scope" value="Eukaryota"/>
</dbReference>
<dbReference type="InParanoid" id="Q75AW7"/>
<dbReference type="OrthoDB" id="302728at2759"/>
<dbReference type="Proteomes" id="UP000000591">
    <property type="component" value="Chromosome IV"/>
</dbReference>
<dbReference type="GO" id="GO:0005783">
    <property type="term" value="C:endoplasmic reticulum"/>
    <property type="evidence" value="ECO:0000318"/>
    <property type="project" value="GO_Central"/>
</dbReference>
<dbReference type="GO" id="GO:0005794">
    <property type="term" value="C:Golgi apparatus"/>
    <property type="evidence" value="ECO:0000318"/>
    <property type="project" value="GO_Central"/>
</dbReference>
<dbReference type="GO" id="GO:0005774">
    <property type="term" value="C:vacuolar membrane"/>
    <property type="evidence" value="ECO:0007669"/>
    <property type="project" value="UniProtKB-SubCell"/>
</dbReference>
<dbReference type="GO" id="GO:0019706">
    <property type="term" value="F:protein-cysteine S-palmitoyltransferase activity"/>
    <property type="evidence" value="ECO:0000318"/>
    <property type="project" value="GO_Central"/>
</dbReference>
<dbReference type="GO" id="GO:0006612">
    <property type="term" value="P:protein targeting to membrane"/>
    <property type="evidence" value="ECO:0000318"/>
    <property type="project" value="GO_Central"/>
</dbReference>
<dbReference type="InterPro" id="IPR001594">
    <property type="entry name" value="Palmitoyltrfase_DHHC"/>
</dbReference>
<dbReference type="InterPro" id="IPR039859">
    <property type="entry name" value="PFA4/ZDH16/20/ERF2-like"/>
</dbReference>
<dbReference type="PANTHER" id="PTHR12246">
    <property type="entry name" value="PALMITOYLTRANSFERASE ZDHHC16"/>
    <property type="match status" value="1"/>
</dbReference>
<dbReference type="Pfam" id="PF01529">
    <property type="entry name" value="DHHC"/>
    <property type="match status" value="1"/>
</dbReference>
<dbReference type="PROSITE" id="PS50216">
    <property type="entry name" value="DHHC"/>
    <property type="match status" value="1"/>
</dbReference>
<feature type="chain" id="PRO_0000212949" description="Palmitoyltransferase PFA3">
    <location>
        <begin position="1"/>
        <end position="325"/>
    </location>
</feature>
<feature type="topological domain" description="Cytoplasmic" evidence="2">
    <location>
        <begin position="1"/>
        <end position="8"/>
    </location>
</feature>
<feature type="transmembrane region" description="Helical" evidence="2">
    <location>
        <begin position="9"/>
        <end position="29"/>
    </location>
</feature>
<feature type="topological domain" description="Lumenal" evidence="2">
    <location>
        <position position="30"/>
    </location>
</feature>
<feature type="transmembrane region" description="Helical" evidence="2">
    <location>
        <begin position="31"/>
        <end position="51"/>
    </location>
</feature>
<feature type="topological domain" description="Cytoplasmic" evidence="2">
    <location>
        <begin position="52"/>
        <end position="147"/>
    </location>
</feature>
<feature type="transmembrane region" description="Helical" evidence="2">
    <location>
        <begin position="148"/>
        <end position="168"/>
    </location>
</feature>
<feature type="topological domain" description="Lumenal" evidence="2">
    <location>
        <begin position="169"/>
        <end position="188"/>
    </location>
</feature>
<feature type="transmembrane region" description="Helical" evidence="2">
    <location>
        <begin position="189"/>
        <end position="209"/>
    </location>
</feature>
<feature type="topological domain" description="Cytoplasmic" evidence="2">
    <location>
        <begin position="210"/>
        <end position="325"/>
    </location>
</feature>
<feature type="domain" description="DHHC" evidence="3">
    <location>
        <begin position="104"/>
        <end position="154"/>
    </location>
</feature>
<sequence length="325" mass="37225">MHICSLIPILFPKLLTCGLALYSAVVLWLKVSVIGSFIQGTVLLTLVPLILYAYFSTIAVGPGSPLDFEELRIRDLNDVETGMEFPPDFLAAKTVTLDSTGRHRYCVKCKVWKPDRCHHCSACDKCYLRRDHHCVWFPGCIGYNNHKFFLHFLLYASVYAFWICIITTWDLVVWFRAHSYERELLNVHLVCLWALSAAATVALTAFCAFNIYLVCKNETTGEYQRRSTLNSDLEMYADCTNGPRTVIENPFDLGSRRRNWAAVMGDTWKEWLLPIRTTASQKARHSFDESGLYFKIDEQAHAKLAESMALQARLITRFNSKRAVQ</sequence>
<accession>Q75AW7</accession>
<evidence type="ECO:0000250" key="1"/>
<evidence type="ECO:0000255" key="2"/>
<evidence type="ECO:0000255" key="3">
    <source>
        <dbReference type="PROSITE-ProRule" id="PRU00067"/>
    </source>
</evidence>
<evidence type="ECO:0000305" key="4"/>
<gene>
    <name type="primary">PFA3</name>
    <name type="ordered locus">ADL197C</name>
</gene>
<comment type="function">
    <text evidence="1">Palmitoyltransferase specific for VAC8. Palmitoylates VAC8 at one or more of its N-terminal cysteine residues, which is required for its proper membrane localization (By similarity).</text>
</comment>
<comment type="catalytic activity">
    <reaction>
        <text>L-cysteinyl-[protein] + hexadecanoyl-CoA = S-hexadecanoyl-L-cysteinyl-[protein] + CoA</text>
        <dbReference type="Rhea" id="RHEA:36683"/>
        <dbReference type="Rhea" id="RHEA-COMP:10131"/>
        <dbReference type="Rhea" id="RHEA-COMP:11032"/>
        <dbReference type="ChEBI" id="CHEBI:29950"/>
        <dbReference type="ChEBI" id="CHEBI:57287"/>
        <dbReference type="ChEBI" id="CHEBI:57379"/>
        <dbReference type="ChEBI" id="CHEBI:74151"/>
        <dbReference type="EC" id="2.3.1.225"/>
    </reaction>
</comment>
<comment type="subcellular location">
    <subcellularLocation>
        <location evidence="1">Vacuole membrane</location>
        <topology evidence="1">Multi-pass membrane protein</topology>
    </subcellularLocation>
</comment>
<comment type="domain">
    <text evidence="1">The DHHC domain is required for palmitoyltransferase activity.</text>
</comment>
<comment type="PTM">
    <text evidence="1">Autopalmitoylated.</text>
</comment>
<comment type="similarity">
    <text evidence="4">Belongs to the DHHC palmitoyltransferase family. PFA3 subfamily.</text>
</comment>
<comment type="sequence caution" evidence="4">
    <conflict type="erroneous initiation">
        <sequence resource="EMBL-CDS" id="AAS51723"/>
    </conflict>
</comment>
<protein>
    <recommendedName>
        <fullName>Palmitoyltransferase PFA3</fullName>
        <ecNumber>2.3.1.225</ecNumber>
    </recommendedName>
    <alternativeName>
        <fullName>Protein fatty acyltransferase 3</fullName>
    </alternativeName>
</protein>
<reference key="1">
    <citation type="journal article" date="2004" name="Science">
        <title>The Ashbya gossypii genome as a tool for mapping the ancient Saccharomyces cerevisiae genome.</title>
        <authorList>
            <person name="Dietrich F.S."/>
            <person name="Voegeli S."/>
            <person name="Brachat S."/>
            <person name="Lerch A."/>
            <person name="Gates K."/>
            <person name="Steiner S."/>
            <person name="Mohr C."/>
            <person name="Poehlmann R."/>
            <person name="Luedi P."/>
            <person name="Choi S."/>
            <person name="Wing R.A."/>
            <person name="Flavier A."/>
            <person name="Gaffney T.D."/>
            <person name="Philippsen P."/>
        </authorList>
    </citation>
    <scope>NUCLEOTIDE SEQUENCE [LARGE SCALE GENOMIC DNA]</scope>
    <source>
        <strain>ATCC 10895 / CBS 109.51 / FGSC 9923 / NRRL Y-1056</strain>
    </source>
</reference>
<reference key="2">
    <citation type="journal article" date="2013" name="G3 (Bethesda)">
        <title>Genomes of Ashbya fungi isolated from insects reveal four mating-type loci, numerous translocations, lack of transposons, and distinct gene duplications.</title>
        <authorList>
            <person name="Dietrich F.S."/>
            <person name="Voegeli S."/>
            <person name="Kuo S."/>
            <person name="Philippsen P."/>
        </authorList>
    </citation>
    <scope>GENOME REANNOTATION</scope>
    <source>
        <strain>ATCC 10895 / CBS 109.51 / FGSC 9923 / NRRL Y-1056</strain>
    </source>
</reference>
<organism>
    <name type="scientific">Eremothecium gossypii (strain ATCC 10895 / CBS 109.51 / FGSC 9923 / NRRL Y-1056)</name>
    <name type="common">Yeast</name>
    <name type="synonym">Ashbya gossypii</name>
    <dbReference type="NCBI Taxonomy" id="284811"/>
    <lineage>
        <taxon>Eukaryota</taxon>
        <taxon>Fungi</taxon>
        <taxon>Dikarya</taxon>
        <taxon>Ascomycota</taxon>
        <taxon>Saccharomycotina</taxon>
        <taxon>Saccharomycetes</taxon>
        <taxon>Saccharomycetales</taxon>
        <taxon>Saccharomycetaceae</taxon>
        <taxon>Eremothecium</taxon>
    </lineage>
</organism>